<evidence type="ECO:0000255" key="1">
    <source>
        <dbReference type="HAMAP-Rule" id="MF_00211"/>
    </source>
</evidence>
<accession>Q9V1G4</accession>
<accession>G8ZGG7</accession>
<dbReference type="EC" id="2.4.2.18" evidence="1"/>
<dbReference type="EMBL" id="AJ248284">
    <property type="protein sequence ID" value="CAB49385.1"/>
    <property type="molecule type" value="Genomic_DNA"/>
</dbReference>
<dbReference type="EMBL" id="HE613800">
    <property type="protein sequence ID" value="CCE69846.1"/>
    <property type="molecule type" value="Genomic_DNA"/>
</dbReference>
<dbReference type="PIR" id="B75163">
    <property type="entry name" value="B75163"/>
</dbReference>
<dbReference type="RefSeq" id="WP_010867587.1">
    <property type="nucleotide sequence ID" value="NC_000868.1"/>
</dbReference>
<dbReference type="SMR" id="Q9V1G4"/>
<dbReference type="STRING" id="272844.PAB2044"/>
<dbReference type="KEGG" id="pab:PAB2044"/>
<dbReference type="PATRIC" id="fig|272844.11.peg.490"/>
<dbReference type="eggNOG" id="arCOG02012">
    <property type="taxonomic scope" value="Archaea"/>
</dbReference>
<dbReference type="HOGENOM" id="CLU_034315_2_1_2"/>
<dbReference type="OrthoDB" id="8214at2157"/>
<dbReference type="PhylomeDB" id="Q9V1G4"/>
<dbReference type="UniPathway" id="UPA00035">
    <property type="reaction ID" value="UER00041"/>
</dbReference>
<dbReference type="Proteomes" id="UP000000810">
    <property type="component" value="Chromosome"/>
</dbReference>
<dbReference type="Proteomes" id="UP000009139">
    <property type="component" value="Chromosome"/>
</dbReference>
<dbReference type="GO" id="GO:0005829">
    <property type="term" value="C:cytosol"/>
    <property type="evidence" value="ECO:0007669"/>
    <property type="project" value="TreeGrafter"/>
</dbReference>
<dbReference type="GO" id="GO:0004048">
    <property type="term" value="F:anthranilate phosphoribosyltransferase activity"/>
    <property type="evidence" value="ECO:0007669"/>
    <property type="project" value="UniProtKB-UniRule"/>
</dbReference>
<dbReference type="GO" id="GO:0000287">
    <property type="term" value="F:magnesium ion binding"/>
    <property type="evidence" value="ECO:0007669"/>
    <property type="project" value="UniProtKB-UniRule"/>
</dbReference>
<dbReference type="GO" id="GO:0000162">
    <property type="term" value="P:L-tryptophan biosynthetic process"/>
    <property type="evidence" value="ECO:0007669"/>
    <property type="project" value="UniProtKB-UniRule"/>
</dbReference>
<dbReference type="FunFam" id="3.40.1030.10:FF:000010">
    <property type="entry name" value="Anthranilate phosphoribosyltransferase"/>
    <property type="match status" value="1"/>
</dbReference>
<dbReference type="Gene3D" id="3.40.1030.10">
    <property type="entry name" value="Nucleoside phosphorylase/phosphoribosyltransferase catalytic domain"/>
    <property type="match status" value="1"/>
</dbReference>
<dbReference type="Gene3D" id="1.20.970.10">
    <property type="entry name" value="Transferase, Pyrimidine Nucleoside Phosphorylase, Chain C"/>
    <property type="match status" value="1"/>
</dbReference>
<dbReference type="HAMAP" id="MF_00211">
    <property type="entry name" value="TrpD"/>
    <property type="match status" value="1"/>
</dbReference>
<dbReference type="InterPro" id="IPR005940">
    <property type="entry name" value="Anthranilate_Pribosyl_Tfrase"/>
</dbReference>
<dbReference type="InterPro" id="IPR000312">
    <property type="entry name" value="Glycosyl_Trfase_fam3"/>
</dbReference>
<dbReference type="InterPro" id="IPR017459">
    <property type="entry name" value="Glycosyl_Trfase_fam3_N_dom"/>
</dbReference>
<dbReference type="InterPro" id="IPR036320">
    <property type="entry name" value="Glycosyl_Trfase_fam3_N_dom_sf"/>
</dbReference>
<dbReference type="InterPro" id="IPR035902">
    <property type="entry name" value="Nuc_phospho_transferase"/>
</dbReference>
<dbReference type="NCBIfam" id="TIGR01245">
    <property type="entry name" value="trpD"/>
    <property type="match status" value="1"/>
</dbReference>
<dbReference type="PANTHER" id="PTHR43285">
    <property type="entry name" value="ANTHRANILATE PHOSPHORIBOSYLTRANSFERASE"/>
    <property type="match status" value="1"/>
</dbReference>
<dbReference type="PANTHER" id="PTHR43285:SF2">
    <property type="entry name" value="ANTHRANILATE PHOSPHORIBOSYLTRANSFERASE"/>
    <property type="match status" value="1"/>
</dbReference>
<dbReference type="Pfam" id="PF02885">
    <property type="entry name" value="Glycos_trans_3N"/>
    <property type="match status" value="1"/>
</dbReference>
<dbReference type="Pfam" id="PF00591">
    <property type="entry name" value="Glycos_transf_3"/>
    <property type="match status" value="1"/>
</dbReference>
<dbReference type="SUPFAM" id="SSF52418">
    <property type="entry name" value="Nucleoside phosphorylase/phosphoribosyltransferase catalytic domain"/>
    <property type="match status" value="1"/>
</dbReference>
<dbReference type="SUPFAM" id="SSF47648">
    <property type="entry name" value="Nucleoside phosphorylase/phosphoribosyltransferase N-terminal domain"/>
    <property type="match status" value="1"/>
</dbReference>
<organism>
    <name type="scientific">Pyrococcus abyssi (strain GE5 / Orsay)</name>
    <dbReference type="NCBI Taxonomy" id="272844"/>
    <lineage>
        <taxon>Archaea</taxon>
        <taxon>Methanobacteriati</taxon>
        <taxon>Methanobacteriota</taxon>
        <taxon>Thermococci</taxon>
        <taxon>Thermococcales</taxon>
        <taxon>Thermococcaceae</taxon>
        <taxon>Pyrococcus</taxon>
    </lineage>
</organism>
<feature type="chain" id="PRO_0000154518" description="Anthranilate phosphoribosyltransferase">
    <location>
        <begin position="1"/>
        <end position="324"/>
    </location>
</feature>
<feature type="binding site" evidence="1">
    <location>
        <position position="72"/>
    </location>
    <ligand>
        <name>5-phospho-alpha-D-ribose 1-diphosphate</name>
        <dbReference type="ChEBI" id="CHEBI:58017"/>
    </ligand>
</feature>
<feature type="binding site" evidence="1">
    <location>
        <position position="72"/>
    </location>
    <ligand>
        <name>anthranilate</name>
        <dbReference type="ChEBI" id="CHEBI:16567"/>
        <label>1</label>
    </ligand>
</feature>
<feature type="binding site" evidence="1">
    <location>
        <begin position="75"/>
        <end position="76"/>
    </location>
    <ligand>
        <name>5-phospho-alpha-D-ribose 1-diphosphate</name>
        <dbReference type="ChEBI" id="CHEBI:58017"/>
    </ligand>
</feature>
<feature type="binding site" evidence="1">
    <location>
        <position position="80"/>
    </location>
    <ligand>
        <name>5-phospho-alpha-D-ribose 1-diphosphate</name>
        <dbReference type="ChEBI" id="CHEBI:58017"/>
    </ligand>
</feature>
<feature type="binding site" evidence="1">
    <location>
        <begin position="82"/>
        <end position="85"/>
    </location>
    <ligand>
        <name>5-phospho-alpha-D-ribose 1-diphosphate</name>
        <dbReference type="ChEBI" id="CHEBI:58017"/>
    </ligand>
</feature>
<feature type="binding site" evidence="1">
    <location>
        <position position="84"/>
    </location>
    <ligand>
        <name>Mg(2+)</name>
        <dbReference type="ChEBI" id="CHEBI:18420"/>
        <label>1</label>
    </ligand>
</feature>
<feature type="binding site" evidence="1">
    <location>
        <begin position="99"/>
        <end position="107"/>
    </location>
    <ligand>
        <name>5-phospho-alpha-D-ribose 1-diphosphate</name>
        <dbReference type="ChEBI" id="CHEBI:58017"/>
    </ligand>
</feature>
<feature type="binding site" evidence="1">
    <location>
        <position position="102"/>
    </location>
    <ligand>
        <name>anthranilate</name>
        <dbReference type="ChEBI" id="CHEBI:16567"/>
        <label>1</label>
    </ligand>
</feature>
<feature type="binding site" evidence="1">
    <location>
        <position position="111"/>
    </location>
    <ligand>
        <name>5-phospho-alpha-D-ribose 1-diphosphate</name>
        <dbReference type="ChEBI" id="CHEBI:58017"/>
    </ligand>
</feature>
<feature type="binding site" evidence="1">
    <location>
        <position position="157"/>
    </location>
    <ligand>
        <name>anthranilate</name>
        <dbReference type="ChEBI" id="CHEBI:16567"/>
        <label>2</label>
    </ligand>
</feature>
<feature type="binding site" evidence="1">
    <location>
        <position position="215"/>
    </location>
    <ligand>
        <name>Mg(2+)</name>
        <dbReference type="ChEBI" id="CHEBI:18420"/>
        <label>2</label>
    </ligand>
</feature>
<feature type="binding site" evidence="1">
    <location>
        <position position="216"/>
    </location>
    <ligand>
        <name>Mg(2+)</name>
        <dbReference type="ChEBI" id="CHEBI:18420"/>
        <label>1</label>
    </ligand>
</feature>
<feature type="binding site" evidence="1">
    <location>
        <position position="216"/>
    </location>
    <ligand>
        <name>Mg(2+)</name>
        <dbReference type="ChEBI" id="CHEBI:18420"/>
        <label>2</label>
    </ligand>
</feature>
<reference key="1">
    <citation type="journal article" date="2003" name="Mol. Microbiol.">
        <title>An integrated analysis of the genome of the hyperthermophilic archaeon Pyrococcus abyssi.</title>
        <authorList>
            <person name="Cohen G.N."/>
            <person name="Barbe V."/>
            <person name="Flament D."/>
            <person name="Galperin M."/>
            <person name="Heilig R."/>
            <person name="Lecompte O."/>
            <person name="Poch O."/>
            <person name="Prieur D."/>
            <person name="Querellou J."/>
            <person name="Ripp R."/>
            <person name="Thierry J.-C."/>
            <person name="Van der Oost J."/>
            <person name="Weissenbach J."/>
            <person name="Zivanovic Y."/>
            <person name="Forterre P."/>
        </authorList>
    </citation>
    <scope>NUCLEOTIDE SEQUENCE [LARGE SCALE GENOMIC DNA]</scope>
    <source>
        <strain>GE5 / Orsay</strain>
    </source>
</reference>
<reference key="2">
    <citation type="journal article" date="2012" name="Curr. Microbiol.">
        <title>Re-annotation of two hyperthermophilic archaea Pyrococcus abyssi GE5 and Pyrococcus furiosus DSM 3638.</title>
        <authorList>
            <person name="Gao J."/>
            <person name="Wang J."/>
        </authorList>
    </citation>
    <scope>GENOME REANNOTATION</scope>
    <source>
        <strain>GE5 / Orsay</strain>
    </source>
</reference>
<name>TRPD_PYRAB</name>
<protein>
    <recommendedName>
        <fullName evidence="1">Anthranilate phosphoribosyltransferase</fullName>
        <ecNumber evidence="1">2.4.2.18</ecNumber>
    </recommendedName>
</protein>
<proteinExistence type="inferred from homology"/>
<keyword id="KW-0028">Amino-acid biosynthesis</keyword>
<keyword id="KW-0057">Aromatic amino acid biosynthesis</keyword>
<keyword id="KW-0328">Glycosyltransferase</keyword>
<keyword id="KW-0460">Magnesium</keyword>
<keyword id="KW-0479">Metal-binding</keyword>
<keyword id="KW-0808">Transferase</keyword>
<keyword id="KW-0822">Tryptophan biosynthesis</keyword>
<comment type="function">
    <text evidence="1">Catalyzes the transfer of the phosphoribosyl group of 5-phosphorylribose-1-pyrophosphate (PRPP) to anthranilate to yield N-(5'-phosphoribosyl)-anthranilate (PRA).</text>
</comment>
<comment type="catalytic activity">
    <reaction evidence="1">
        <text>N-(5-phospho-beta-D-ribosyl)anthranilate + diphosphate = 5-phospho-alpha-D-ribose 1-diphosphate + anthranilate</text>
        <dbReference type="Rhea" id="RHEA:11768"/>
        <dbReference type="ChEBI" id="CHEBI:16567"/>
        <dbReference type="ChEBI" id="CHEBI:18277"/>
        <dbReference type="ChEBI" id="CHEBI:33019"/>
        <dbReference type="ChEBI" id="CHEBI:58017"/>
        <dbReference type="EC" id="2.4.2.18"/>
    </reaction>
</comment>
<comment type="cofactor">
    <cofactor evidence="1">
        <name>Mg(2+)</name>
        <dbReference type="ChEBI" id="CHEBI:18420"/>
    </cofactor>
    <text evidence="1">Binds 2 magnesium ions per monomer.</text>
</comment>
<comment type="pathway">
    <text evidence="1">Amino-acid biosynthesis; L-tryptophan biosynthesis; L-tryptophan from chorismate: step 2/5.</text>
</comment>
<comment type="subunit">
    <text evidence="1">Homodimer.</text>
</comment>
<comment type="similarity">
    <text evidence="1">Belongs to the anthranilate phosphoribosyltransferase family.</text>
</comment>
<gene>
    <name evidence="1" type="primary">trpD</name>
    <name type="ordered locus">PYRAB04630</name>
    <name type="ORF">PAB2044</name>
</gene>
<sequence length="324" mass="35296">MLEKIINRENLSFEEAYNLFKELMNESDVRIAAYLAAFQTKGYTAEEIAGLAKAMRDYAIKLELGEVADTAGTGGDGSSSINVSTASALILSAFTKVAKHGNVSITSKSGSANVLEALGLNIKIPPEKARKMIEKTNFTFIFAPMYHPALKRIMPVRRELKVKTVFNILGPLANPAEPKFQVLGVNSPDLVEKMAEALSFLGVERALVVHGMGLDEVNPRGETIVAEVNGEDIDMYTLTPEDFGVERVKVVPCNSPQESAERIKAVLRGEGKVEDRNFILINASAALYASKVAEDFREGVELVKGILGEPMSKKLEEIICTSRS</sequence>